<reference key="1">
    <citation type="journal article" date="1998" name="J. Immunol.">
        <title>Identification of CCR8 as the specific receptor for the human beta-chemokine I-309: cloning and molecular characterization of murine CCR8 as the receptor for TCA-3.</title>
        <authorList>
            <person name="Goya I."/>
            <person name="Gutierrez J."/>
            <person name="Varona R."/>
            <person name="Kremer L."/>
            <person name="Zaballos A."/>
            <person name="Marquez G."/>
        </authorList>
    </citation>
    <scope>NUCLEOTIDE SEQUENCE [GENOMIC DNA / MRNA]</scope>
    <scope>FUNCTION</scope>
    <scope>TISSUE SPECIFICITY</scope>
</reference>
<reference key="2">
    <citation type="journal article" date="1998" name="J. Immunol.">
        <title>The chemokine receptor CCR8 is preferentially expressed in Th2 but not Th1 cells.</title>
        <authorList>
            <person name="Zingoni A."/>
            <person name="Soto H."/>
            <person name="Hedrick J.A."/>
            <person name="Stoppacciaro A."/>
            <person name="Storlazzi C.T."/>
            <person name="Sinigaglia F."/>
            <person name="D'Ambrosio D."/>
            <person name="O'Garra A."/>
            <person name="Robinson D."/>
            <person name="Rocchi M."/>
            <person name="Santoni A."/>
            <person name="Zlotnik A."/>
            <person name="Napolitano M."/>
        </authorList>
    </citation>
    <scope>NUCLEOTIDE SEQUENCE [GENOMIC DNA]</scope>
    <source>
        <strain>129/Sv</strain>
    </source>
</reference>
<keyword id="KW-1003">Cell membrane</keyword>
<keyword id="KW-1015">Disulfide bond</keyword>
<keyword id="KW-0297">G-protein coupled receptor</keyword>
<keyword id="KW-0325">Glycoprotein</keyword>
<keyword id="KW-0472">Membrane</keyword>
<keyword id="KW-0675">Receptor</keyword>
<keyword id="KW-1185">Reference proteome</keyword>
<keyword id="KW-0807">Transducer</keyword>
<keyword id="KW-0812">Transmembrane</keyword>
<keyword id="KW-1133">Transmembrane helix</keyword>
<organism>
    <name type="scientific">Mus musculus</name>
    <name type="common">Mouse</name>
    <dbReference type="NCBI Taxonomy" id="10090"/>
    <lineage>
        <taxon>Eukaryota</taxon>
        <taxon>Metazoa</taxon>
        <taxon>Chordata</taxon>
        <taxon>Craniata</taxon>
        <taxon>Vertebrata</taxon>
        <taxon>Euteleostomi</taxon>
        <taxon>Mammalia</taxon>
        <taxon>Eutheria</taxon>
        <taxon>Euarchontoglires</taxon>
        <taxon>Glires</taxon>
        <taxon>Rodentia</taxon>
        <taxon>Myomorpha</taxon>
        <taxon>Muroidea</taxon>
        <taxon>Muridae</taxon>
        <taxon>Murinae</taxon>
        <taxon>Mus</taxon>
        <taxon>Mus</taxon>
    </lineage>
</organism>
<comment type="function">
    <text evidence="3">Receptor for the CCL1/SCY1/TCA-3 chemokine.</text>
</comment>
<comment type="subcellular location">
    <subcellularLocation>
        <location>Cell membrane</location>
        <topology>Multi-pass membrane protein</topology>
    </subcellularLocation>
</comment>
<comment type="tissue specificity">
    <text evidence="3">Expressed in thymus.</text>
</comment>
<comment type="similarity">
    <text evidence="2">Belongs to the G-protein coupled receptor 1 family.</text>
</comment>
<dbReference type="EMBL" id="Z98206">
    <property type="protein sequence ID" value="CAB10896.1"/>
    <property type="molecule type" value="Genomic_DNA"/>
</dbReference>
<dbReference type="EMBL" id="Z98205">
    <property type="protein sequence ID" value="CAB10895.1"/>
    <property type="molecule type" value="mRNA"/>
</dbReference>
<dbReference type="EMBL" id="AF001277">
    <property type="protein sequence ID" value="AAC97598.1"/>
    <property type="molecule type" value="Genomic_DNA"/>
</dbReference>
<dbReference type="CCDS" id="CCDS23621.1"/>
<dbReference type="RefSeq" id="NP_031746.1">
    <property type="nucleotide sequence ID" value="NM_007720.2"/>
</dbReference>
<dbReference type="SMR" id="P56484"/>
<dbReference type="BioGRID" id="198776">
    <property type="interactions" value="1"/>
</dbReference>
<dbReference type="FunCoup" id="P56484">
    <property type="interactions" value="360"/>
</dbReference>
<dbReference type="STRING" id="10090.ENSMUSP00000038473"/>
<dbReference type="ChEMBL" id="CHEMBL1075278"/>
<dbReference type="GuidetoPHARMACOLOGY" id="65"/>
<dbReference type="GlyCosmos" id="P56484">
    <property type="glycosylation" value="1 site, No reported glycans"/>
</dbReference>
<dbReference type="GlyGen" id="P56484">
    <property type="glycosylation" value="2 sites"/>
</dbReference>
<dbReference type="PhosphoSitePlus" id="P56484"/>
<dbReference type="PaxDb" id="10090-ENSMUSP00000038473"/>
<dbReference type="Antibodypedia" id="12174">
    <property type="antibodies" value="562 antibodies from 38 providers"/>
</dbReference>
<dbReference type="DNASU" id="12776"/>
<dbReference type="Ensembl" id="ENSMUST00000048777.4">
    <property type="protein sequence ID" value="ENSMUSP00000038473.3"/>
    <property type="gene ID" value="ENSMUSG00000042262.6"/>
</dbReference>
<dbReference type="GeneID" id="12776"/>
<dbReference type="KEGG" id="mmu:12776"/>
<dbReference type="UCSC" id="uc009sca.1">
    <property type="organism name" value="mouse"/>
</dbReference>
<dbReference type="AGR" id="MGI:1201402"/>
<dbReference type="CTD" id="1237"/>
<dbReference type="MGI" id="MGI:1201402">
    <property type="gene designation" value="Ccr8"/>
</dbReference>
<dbReference type="VEuPathDB" id="HostDB:ENSMUSG00000042262"/>
<dbReference type="eggNOG" id="KOG3656">
    <property type="taxonomic scope" value="Eukaryota"/>
</dbReference>
<dbReference type="GeneTree" id="ENSGT01020000230359"/>
<dbReference type="HOGENOM" id="CLU_009579_8_3_1"/>
<dbReference type="InParanoid" id="P56484"/>
<dbReference type="OMA" id="YAMRIRT"/>
<dbReference type="OrthoDB" id="8951197at2759"/>
<dbReference type="PhylomeDB" id="P56484"/>
<dbReference type="TreeFam" id="TF330966"/>
<dbReference type="Reactome" id="R-MMU-380108">
    <property type="pathway name" value="Chemokine receptors bind chemokines"/>
</dbReference>
<dbReference type="Reactome" id="R-MMU-418594">
    <property type="pathway name" value="G alpha (i) signalling events"/>
</dbReference>
<dbReference type="BioGRID-ORCS" id="12776">
    <property type="hits" value="2 hits in 78 CRISPR screens"/>
</dbReference>
<dbReference type="PRO" id="PR:P56484"/>
<dbReference type="Proteomes" id="UP000000589">
    <property type="component" value="Chromosome 9"/>
</dbReference>
<dbReference type="RNAct" id="P56484">
    <property type="molecule type" value="protein"/>
</dbReference>
<dbReference type="Bgee" id="ENSMUSG00000042262">
    <property type="expression patterns" value="Expressed in blastoderm cell in morula and 40 other cell types or tissues"/>
</dbReference>
<dbReference type="ExpressionAtlas" id="P56484">
    <property type="expression patterns" value="baseline and differential"/>
</dbReference>
<dbReference type="GO" id="GO:0005886">
    <property type="term" value="C:plasma membrane"/>
    <property type="evidence" value="ECO:0007669"/>
    <property type="project" value="UniProtKB-SubCell"/>
</dbReference>
<dbReference type="GO" id="GO:0016493">
    <property type="term" value="F:C-C chemokine receptor activity"/>
    <property type="evidence" value="ECO:0000314"/>
    <property type="project" value="MGI"/>
</dbReference>
<dbReference type="GO" id="GO:0006935">
    <property type="term" value="P:chemotaxis"/>
    <property type="evidence" value="ECO:0000314"/>
    <property type="project" value="MGI"/>
</dbReference>
<dbReference type="GO" id="GO:0006955">
    <property type="term" value="P:immune response"/>
    <property type="evidence" value="ECO:0007669"/>
    <property type="project" value="InterPro"/>
</dbReference>
<dbReference type="GO" id="GO:0007204">
    <property type="term" value="P:positive regulation of cytosolic calcium ion concentration"/>
    <property type="evidence" value="ECO:0007669"/>
    <property type="project" value="InterPro"/>
</dbReference>
<dbReference type="CDD" id="cd15187">
    <property type="entry name" value="7tmA_CCR8"/>
    <property type="match status" value="1"/>
</dbReference>
<dbReference type="FunFam" id="1.20.1070.10:FF:000026">
    <property type="entry name" value="C-C chemokine receptor type 5"/>
    <property type="match status" value="1"/>
</dbReference>
<dbReference type="Gene3D" id="1.20.1070.10">
    <property type="entry name" value="Rhodopsin 7-helix transmembrane proteins"/>
    <property type="match status" value="1"/>
</dbReference>
<dbReference type="InterPro" id="IPR050119">
    <property type="entry name" value="CCR1-9-like"/>
</dbReference>
<dbReference type="InterPro" id="IPR004068">
    <property type="entry name" value="Chemokine_CCR8"/>
</dbReference>
<dbReference type="InterPro" id="IPR000355">
    <property type="entry name" value="Chemokine_rcpt"/>
</dbReference>
<dbReference type="InterPro" id="IPR000276">
    <property type="entry name" value="GPCR_Rhodpsn"/>
</dbReference>
<dbReference type="InterPro" id="IPR017452">
    <property type="entry name" value="GPCR_Rhodpsn_7TM"/>
</dbReference>
<dbReference type="PANTHER" id="PTHR10489:SF627">
    <property type="entry name" value="C-C CHEMOKINE RECEPTOR TYPE 8"/>
    <property type="match status" value="1"/>
</dbReference>
<dbReference type="PANTHER" id="PTHR10489">
    <property type="entry name" value="CELL ADHESION MOLECULE"/>
    <property type="match status" value="1"/>
</dbReference>
<dbReference type="Pfam" id="PF00001">
    <property type="entry name" value="7tm_1"/>
    <property type="match status" value="1"/>
</dbReference>
<dbReference type="PRINTS" id="PR00657">
    <property type="entry name" value="CCCHEMOKINER"/>
</dbReference>
<dbReference type="PRINTS" id="PR01530">
    <property type="entry name" value="CHEMOKINER8"/>
</dbReference>
<dbReference type="PRINTS" id="PR00237">
    <property type="entry name" value="GPCRRHODOPSN"/>
</dbReference>
<dbReference type="SUPFAM" id="SSF81321">
    <property type="entry name" value="Family A G protein-coupled receptor-like"/>
    <property type="match status" value="1"/>
</dbReference>
<dbReference type="PROSITE" id="PS00237">
    <property type="entry name" value="G_PROTEIN_RECEP_F1_1"/>
    <property type="match status" value="1"/>
</dbReference>
<dbReference type="PROSITE" id="PS50262">
    <property type="entry name" value="G_PROTEIN_RECEP_F1_2"/>
    <property type="match status" value="1"/>
</dbReference>
<name>CCR8_MOUSE</name>
<proteinExistence type="evidence at transcript level"/>
<evidence type="ECO:0000255" key="1"/>
<evidence type="ECO:0000255" key="2">
    <source>
        <dbReference type="PROSITE-ProRule" id="PRU00521"/>
    </source>
</evidence>
<evidence type="ECO:0000269" key="3">
    <source>
    </source>
</evidence>
<feature type="chain" id="PRO_0000069290" description="C-C chemokine receptor type 8">
    <location>
        <begin position="1"/>
        <end position="353"/>
    </location>
</feature>
<feature type="topological domain" description="Extracellular" evidence="1">
    <location>
        <begin position="1"/>
        <end position="33"/>
    </location>
</feature>
<feature type="transmembrane region" description="Helical; Name=1" evidence="1">
    <location>
        <begin position="34"/>
        <end position="61"/>
    </location>
</feature>
<feature type="topological domain" description="Cytoplasmic" evidence="1">
    <location>
        <begin position="62"/>
        <end position="71"/>
    </location>
</feature>
<feature type="transmembrane region" description="Helical; Name=2" evidence="1">
    <location>
        <begin position="72"/>
        <end position="91"/>
    </location>
</feature>
<feature type="topological domain" description="Extracellular" evidence="1">
    <location>
        <begin position="92"/>
        <end position="105"/>
    </location>
</feature>
<feature type="transmembrane region" description="Helical; Name=3" evidence="1">
    <location>
        <begin position="106"/>
        <end position="127"/>
    </location>
</feature>
<feature type="topological domain" description="Cytoplasmic" evidence="1">
    <location>
        <begin position="128"/>
        <end position="144"/>
    </location>
</feature>
<feature type="transmembrane region" description="Helical; Name=4" evidence="1">
    <location>
        <begin position="145"/>
        <end position="169"/>
    </location>
</feature>
<feature type="topological domain" description="Extracellular" evidence="1">
    <location>
        <begin position="170"/>
        <end position="200"/>
    </location>
</feature>
<feature type="transmembrane region" description="Helical; Name=5" evidence="1">
    <location>
        <begin position="201"/>
        <end position="220"/>
    </location>
</feature>
<feature type="topological domain" description="Cytoplasmic" evidence="1">
    <location>
        <begin position="221"/>
        <end position="236"/>
    </location>
</feature>
<feature type="transmembrane region" description="Helical; Name=6" evidence="1">
    <location>
        <begin position="237"/>
        <end position="261"/>
    </location>
</feature>
<feature type="topological domain" description="Extracellular" evidence="1">
    <location>
        <begin position="262"/>
        <end position="278"/>
    </location>
</feature>
<feature type="transmembrane region" description="Helical; Name=7" evidence="1">
    <location>
        <begin position="279"/>
        <end position="302"/>
    </location>
</feature>
<feature type="topological domain" description="Cytoplasmic" evidence="1">
    <location>
        <begin position="303"/>
        <end position="353"/>
    </location>
</feature>
<feature type="glycosylation site" description="N-linked (GlcNAc...) asparagine" evidence="1">
    <location>
        <position position="8"/>
    </location>
</feature>
<feature type="disulfide bond" evidence="2">
    <location>
        <begin position="104"/>
        <end position="181"/>
    </location>
</feature>
<accession>P56484</accession>
<sequence length="353" mass="40045">MDYTMEPNVTMTDYYPDFFTAPCDAEFLLRGSMLYLAILYCVLFVLGLLGNSLVILVLVGCKKLRSITDIYLLNLAASDLLFVLSIPFQTHNLLDQWVFGTAMCKVVSGLYYIGFFSSMFFITLMSVDRYLAIVHAVYAIKVRTASVGTALSLTVWLAAVTATIPLMVFYQVASEDGMLQCFQFYEEQSLRWKLFTHFEINALGLLLPFAILLFCYVRILQQLRGCLNHNRTRAIKLVLTVVIVSLLFWVPFNVALFLTSLHDLHILDGCATRQRLALAIHVTEVISFTHCCVNPVIYAFIGEKFKKHLMDVFQKSCSHIFLYLGRQMPVGALERQLSSNQRSSHSSTLDDIL</sequence>
<gene>
    <name type="primary">Ccr8</name>
    <name type="synonym">Cmkbr8</name>
    <name type="synonym">Ter1</name>
</gene>
<protein>
    <recommendedName>
        <fullName>C-C chemokine receptor type 8</fullName>
        <shortName>C-C CKR-8</shortName>
        <shortName>CC-CKR-8</shortName>
        <shortName>CCR-8</shortName>
    </recommendedName>
    <cdAntigenName>CDw198</cdAntigenName>
</protein>